<accession>Q5WV15</accession>
<proteinExistence type="inferred from homology"/>
<organism>
    <name type="scientific">Legionella pneumophila (strain Lens)</name>
    <dbReference type="NCBI Taxonomy" id="297245"/>
    <lineage>
        <taxon>Bacteria</taxon>
        <taxon>Pseudomonadati</taxon>
        <taxon>Pseudomonadota</taxon>
        <taxon>Gammaproteobacteria</taxon>
        <taxon>Legionellales</taxon>
        <taxon>Legionellaceae</taxon>
        <taxon>Legionella</taxon>
    </lineage>
</organism>
<evidence type="ECO:0000255" key="1">
    <source>
        <dbReference type="HAMAP-Rule" id="MF_00332"/>
    </source>
</evidence>
<evidence type="ECO:0000256" key="2">
    <source>
        <dbReference type="SAM" id="MobiDB-lite"/>
    </source>
</evidence>
<gene>
    <name evidence="1" type="primary">dnaK</name>
    <name type="ordered locus">lpl2002</name>
</gene>
<dbReference type="EMBL" id="CR628337">
    <property type="protein sequence ID" value="CAH16242.1"/>
    <property type="molecule type" value="Genomic_DNA"/>
</dbReference>
<dbReference type="RefSeq" id="WP_011215985.1">
    <property type="nucleotide sequence ID" value="NC_006369.1"/>
</dbReference>
<dbReference type="SMR" id="Q5WV15"/>
<dbReference type="KEGG" id="lpf:lpl2002"/>
<dbReference type="LegioList" id="lpl2002"/>
<dbReference type="HOGENOM" id="CLU_005965_2_1_6"/>
<dbReference type="Proteomes" id="UP000002517">
    <property type="component" value="Chromosome"/>
</dbReference>
<dbReference type="GO" id="GO:0005524">
    <property type="term" value="F:ATP binding"/>
    <property type="evidence" value="ECO:0007669"/>
    <property type="project" value="UniProtKB-UniRule"/>
</dbReference>
<dbReference type="GO" id="GO:0140662">
    <property type="term" value="F:ATP-dependent protein folding chaperone"/>
    <property type="evidence" value="ECO:0007669"/>
    <property type="project" value="InterPro"/>
</dbReference>
<dbReference type="GO" id="GO:0051082">
    <property type="term" value="F:unfolded protein binding"/>
    <property type="evidence" value="ECO:0007669"/>
    <property type="project" value="InterPro"/>
</dbReference>
<dbReference type="CDD" id="cd10234">
    <property type="entry name" value="ASKHA_NBD_HSP70_DnaK-like"/>
    <property type="match status" value="1"/>
</dbReference>
<dbReference type="FunFam" id="2.60.34.10:FF:000014">
    <property type="entry name" value="Chaperone protein DnaK HSP70"/>
    <property type="match status" value="1"/>
</dbReference>
<dbReference type="FunFam" id="1.20.1270.10:FF:000001">
    <property type="entry name" value="Molecular chaperone DnaK"/>
    <property type="match status" value="1"/>
</dbReference>
<dbReference type="FunFam" id="3.30.420.40:FF:000004">
    <property type="entry name" value="Molecular chaperone DnaK"/>
    <property type="match status" value="1"/>
</dbReference>
<dbReference type="FunFam" id="3.90.640.10:FF:000003">
    <property type="entry name" value="Molecular chaperone DnaK"/>
    <property type="match status" value="1"/>
</dbReference>
<dbReference type="Gene3D" id="1.20.1270.10">
    <property type="match status" value="1"/>
</dbReference>
<dbReference type="Gene3D" id="3.30.420.40">
    <property type="match status" value="2"/>
</dbReference>
<dbReference type="Gene3D" id="3.90.640.10">
    <property type="entry name" value="Actin, Chain A, domain 4"/>
    <property type="match status" value="1"/>
</dbReference>
<dbReference type="Gene3D" id="2.60.34.10">
    <property type="entry name" value="Substrate Binding Domain Of DNAk, Chain A, domain 1"/>
    <property type="match status" value="1"/>
</dbReference>
<dbReference type="HAMAP" id="MF_00332">
    <property type="entry name" value="DnaK"/>
    <property type="match status" value="1"/>
</dbReference>
<dbReference type="InterPro" id="IPR043129">
    <property type="entry name" value="ATPase_NBD"/>
</dbReference>
<dbReference type="InterPro" id="IPR012725">
    <property type="entry name" value="Chaperone_DnaK"/>
</dbReference>
<dbReference type="InterPro" id="IPR018181">
    <property type="entry name" value="Heat_shock_70_CS"/>
</dbReference>
<dbReference type="InterPro" id="IPR029048">
    <property type="entry name" value="HSP70_C_sf"/>
</dbReference>
<dbReference type="InterPro" id="IPR029047">
    <property type="entry name" value="HSP70_peptide-bd_sf"/>
</dbReference>
<dbReference type="InterPro" id="IPR013126">
    <property type="entry name" value="Hsp_70_fam"/>
</dbReference>
<dbReference type="NCBIfam" id="NF001413">
    <property type="entry name" value="PRK00290.1"/>
    <property type="match status" value="1"/>
</dbReference>
<dbReference type="NCBIfam" id="NF003520">
    <property type="entry name" value="PRK05183.1"/>
    <property type="match status" value="1"/>
</dbReference>
<dbReference type="NCBIfam" id="TIGR02350">
    <property type="entry name" value="prok_dnaK"/>
    <property type="match status" value="1"/>
</dbReference>
<dbReference type="PANTHER" id="PTHR19375">
    <property type="entry name" value="HEAT SHOCK PROTEIN 70KDA"/>
    <property type="match status" value="1"/>
</dbReference>
<dbReference type="Pfam" id="PF00012">
    <property type="entry name" value="HSP70"/>
    <property type="match status" value="1"/>
</dbReference>
<dbReference type="PRINTS" id="PR00301">
    <property type="entry name" value="HEATSHOCK70"/>
</dbReference>
<dbReference type="SUPFAM" id="SSF53067">
    <property type="entry name" value="Actin-like ATPase domain"/>
    <property type="match status" value="2"/>
</dbReference>
<dbReference type="SUPFAM" id="SSF100934">
    <property type="entry name" value="Heat shock protein 70kD (HSP70), C-terminal subdomain"/>
    <property type="match status" value="1"/>
</dbReference>
<dbReference type="SUPFAM" id="SSF100920">
    <property type="entry name" value="Heat shock protein 70kD (HSP70), peptide-binding domain"/>
    <property type="match status" value="1"/>
</dbReference>
<dbReference type="PROSITE" id="PS00297">
    <property type="entry name" value="HSP70_1"/>
    <property type="match status" value="1"/>
</dbReference>
<dbReference type="PROSITE" id="PS00329">
    <property type="entry name" value="HSP70_2"/>
    <property type="match status" value="1"/>
</dbReference>
<dbReference type="PROSITE" id="PS01036">
    <property type="entry name" value="HSP70_3"/>
    <property type="match status" value="1"/>
</dbReference>
<protein>
    <recommendedName>
        <fullName evidence="1">Chaperone protein DnaK</fullName>
    </recommendedName>
    <alternativeName>
        <fullName evidence="1">HSP70</fullName>
    </alternativeName>
    <alternativeName>
        <fullName evidence="1">Heat shock 70 kDa protein</fullName>
    </alternativeName>
    <alternativeName>
        <fullName evidence="1">Heat shock protein 70</fullName>
    </alternativeName>
</protein>
<reference key="1">
    <citation type="journal article" date="2004" name="Nat. Genet.">
        <title>Evidence in the Legionella pneumophila genome for exploitation of host cell functions and high genome plasticity.</title>
        <authorList>
            <person name="Cazalet C."/>
            <person name="Rusniok C."/>
            <person name="Brueggemann H."/>
            <person name="Zidane N."/>
            <person name="Magnier A."/>
            <person name="Ma L."/>
            <person name="Tichit M."/>
            <person name="Jarraud S."/>
            <person name="Bouchier C."/>
            <person name="Vandenesch F."/>
            <person name="Kunst F."/>
            <person name="Etienne J."/>
            <person name="Glaser P."/>
            <person name="Buchrieser C."/>
        </authorList>
    </citation>
    <scope>NUCLEOTIDE SEQUENCE [LARGE SCALE GENOMIC DNA]</scope>
    <source>
        <strain>Lens</strain>
    </source>
</reference>
<name>DNAK_LEGPL</name>
<feature type="chain" id="PRO_0000225973" description="Chaperone protein DnaK">
    <location>
        <begin position="1"/>
        <end position="644"/>
    </location>
</feature>
<feature type="region of interest" description="Disordered" evidence="2">
    <location>
        <begin position="602"/>
        <end position="644"/>
    </location>
</feature>
<feature type="compositionally biased region" description="Polar residues" evidence="2">
    <location>
        <begin position="609"/>
        <end position="623"/>
    </location>
</feature>
<feature type="compositionally biased region" description="Acidic residues" evidence="2">
    <location>
        <begin position="629"/>
        <end position="644"/>
    </location>
</feature>
<feature type="modified residue" description="Phosphothreonine; by autocatalysis" evidence="1">
    <location>
        <position position="199"/>
    </location>
</feature>
<sequence>MAKIIGIDLGTTNSCVAVMEGDKPKVIENSEGHRTTPSIVAFTDDNEILVGQSAKRQSVTNPEKTLFAIKRLIGRRFDDPIVQKDIKMVPYKIMKADNGDAWVRVKDQDKAPPQISAEVLRKMKKTAEDYLGEEVKEAVITVPAYFNDSQRQATKDAGRIAGLEVKRIINEPTAAALAYGMDKKRGDSVIAVYDLGGGTFDISIIEIAEVDGEHQFEVLATNGDTFLGGEDFDLALIEYLASEFKKDTGIDLHNDPLALQRLKEAAEKAKIELSSAQQTDVNLPYITADASGPKHLNIKLTRAKLESLVEKLVERTIEPCKTALKDAGLTVSQINEVILVGGQTRMPLVQKTVEEFFGKEPRKDVNPDEAVAVGAAIQAAVLSGEVKDILLLDVTPLSLGIETMGGVMTKLIEKNTTIPTKATQVFSTADDNQTAVTVHVLQGEREQASANKSLGRFDLRDIPPAPRGVPQIEVTFDIDANGILNVSAKDKATGKAQSIVIKASSGLSEEEVAAMVKDAQSHAEEDKKFKEMAELRNQADSLIHSCEKSMKDLADELSEDEKKGIETAISELKEAVQGTDKARIEDKLKVLTDASAKMAERIYAKKSSEGQTAQGQTQSQESTKPAEEGVVDAEFEEVKEEDKK</sequence>
<comment type="function">
    <text evidence="1">Acts as a chaperone.</text>
</comment>
<comment type="induction">
    <text evidence="1">By stress conditions e.g. heat shock.</text>
</comment>
<comment type="similarity">
    <text evidence="1">Belongs to the heat shock protein 70 family.</text>
</comment>
<keyword id="KW-0067">ATP-binding</keyword>
<keyword id="KW-0143">Chaperone</keyword>
<keyword id="KW-0547">Nucleotide-binding</keyword>
<keyword id="KW-0597">Phosphoprotein</keyword>
<keyword id="KW-0346">Stress response</keyword>